<proteinExistence type="inferred from homology"/>
<reference key="1">
    <citation type="journal article" date="2004" name="Proc. Natl. Acad. Sci. U.S.A.">
        <title>Insights into the evolution of Yersinia pestis through whole-genome comparison with Yersinia pseudotuberculosis.</title>
        <authorList>
            <person name="Chain P.S.G."/>
            <person name="Carniel E."/>
            <person name="Larimer F.W."/>
            <person name="Lamerdin J."/>
            <person name="Stoutland P.O."/>
            <person name="Regala W.M."/>
            <person name="Georgescu A.M."/>
            <person name="Vergez L.M."/>
            <person name="Land M.L."/>
            <person name="Motin V.L."/>
            <person name="Brubaker R.R."/>
            <person name="Fowler J."/>
            <person name="Hinnebusch J."/>
            <person name="Marceau M."/>
            <person name="Medigue C."/>
            <person name="Simonet M."/>
            <person name="Chenal-Francisque V."/>
            <person name="Souza B."/>
            <person name="Dacheux D."/>
            <person name="Elliott J.M."/>
            <person name="Derbise A."/>
            <person name="Hauser L.J."/>
            <person name="Garcia E."/>
        </authorList>
    </citation>
    <scope>NUCLEOTIDE SEQUENCE [LARGE SCALE GENOMIC DNA]</scope>
    <source>
        <strain>IP32953</strain>
    </source>
</reference>
<dbReference type="EC" id="6.1.1.16" evidence="1"/>
<dbReference type="EMBL" id="BX936398">
    <property type="protein sequence ID" value="CAH20275.1"/>
    <property type="molecule type" value="Genomic_DNA"/>
</dbReference>
<dbReference type="RefSeq" id="WP_011191897.1">
    <property type="nucleotide sequence ID" value="NC_006155.1"/>
</dbReference>
<dbReference type="SMR" id="Q66DK9"/>
<dbReference type="KEGG" id="ypo:BZ17_1511"/>
<dbReference type="KEGG" id="yps:YPTB1035"/>
<dbReference type="PATRIC" id="fig|273123.14.peg.1604"/>
<dbReference type="Proteomes" id="UP000001011">
    <property type="component" value="Chromosome"/>
</dbReference>
<dbReference type="GO" id="GO:0005829">
    <property type="term" value="C:cytosol"/>
    <property type="evidence" value="ECO:0007669"/>
    <property type="project" value="TreeGrafter"/>
</dbReference>
<dbReference type="GO" id="GO:0005524">
    <property type="term" value="F:ATP binding"/>
    <property type="evidence" value="ECO:0007669"/>
    <property type="project" value="UniProtKB-UniRule"/>
</dbReference>
<dbReference type="GO" id="GO:0004817">
    <property type="term" value="F:cysteine-tRNA ligase activity"/>
    <property type="evidence" value="ECO:0007669"/>
    <property type="project" value="UniProtKB-UniRule"/>
</dbReference>
<dbReference type="GO" id="GO:0008270">
    <property type="term" value="F:zinc ion binding"/>
    <property type="evidence" value="ECO:0007669"/>
    <property type="project" value="UniProtKB-UniRule"/>
</dbReference>
<dbReference type="GO" id="GO:0006423">
    <property type="term" value="P:cysteinyl-tRNA aminoacylation"/>
    <property type="evidence" value="ECO:0007669"/>
    <property type="project" value="UniProtKB-UniRule"/>
</dbReference>
<dbReference type="CDD" id="cd07963">
    <property type="entry name" value="Anticodon_Ia_Cys"/>
    <property type="match status" value="1"/>
</dbReference>
<dbReference type="CDD" id="cd00672">
    <property type="entry name" value="CysRS_core"/>
    <property type="match status" value="1"/>
</dbReference>
<dbReference type="FunFam" id="1.20.120.1910:FF:000001">
    <property type="entry name" value="Cysteine--tRNA ligase"/>
    <property type="match status" value="1"/>
</dbReference>
<dbReference type="FunFam" id="3.40.50.620:FF:000009">
    <property type="entry name" value="Cysteine--tRNA ligase"/>
    <property type="match status" value="1"/>
</dbReference>
<dbReference type="Gene3D" id="1.20.120.1910">
    <property type="entry name" value="Cysteine-tRNA ligase, C-terminal anti-codon recognition domain"/>
    <property type="match status" value="1"/>
</dbReference>
<dbReference type="Gene3D" id="3.40.50.620">
    <property type="entry name" value="HUPs"/>
    <property type="match status" value="1"/>
</dbReference>
<dbReference type="HAMAP" id="MF_00041">
    <property type="entry name" value="Cys_tRNA_synth"/>
    <property type="match status" value="1"/>
</dbReference>
<dbReference type="InterPro" id="IPR015803">
    <property type="entry name" value="Cys-tRNA-ligase"/>
</dbReference>
<dbReference type="InterPro" id="IPR015273">
    <property type="entry name" value="Cys-tRNA-synt_Ia_DALR"/>
</dbReference>
<dbReference type="InterPro" id="IPR024909">
    <property type="entry name" value="Cys-tRNA/MSH_ligase"/>
</dbReference>
<dbReference type="InterPro" id="IPR056411">
    <property type="entry name" value="CysS_C"/>
</dbReference>
<dbReference type="InterPro" id="IPR014729">
    <property type="entry name" value="Rossmann-like_a/b/a_fold"/>
</dbReference>
<dbReference type="InterPro" id="IPR032678">
    <property type="entry name" value="tRNA-synt_1_cat_dom"/>
</dbReference>
<dbReference type="InterPro" id="IPR009080">
    <property type="entry name" value="tRNAsynth_Ia_anticodon-bd"/>
</dbReference>
<dbReference type="NCBIfam" id="TIGR00435">
    <property type="entry name" value="cysS"/>
    <property type="match status" value="1"/>
</dbReference>
<dbReference type="PANTHER" id="PTHR10890:SF3">
    <property type="entry name" value="CYSTEINE--TRNA LIGASE, CYTOPLASMIC"/>
    <property type="match status" value="1"/>
</dbReference>
<dbReference type="PANTHER" id="PTHR10890">
    <property type="entry name" value="CYSTEINYL-TRNA SYNTHETASE"/>
    <property type="match status" value="1"/>
</dbReference>
<dbReference type="Pfam" id="PF23493">
    <property type="entry name" value="CysS_C"/>
    <property type="match status" value="1"/>
</dbReference>
<dbReference type="Pfam" id="PF09190">
    <property type="entry name" value="DALR_2"/>
    <property type="match status" value="1"/>
</dbReference>
<dbReference type="Pfam" id="PF01406">
    <property type="entry name" value="tRNA-synt_1e"/>
    <property type="match status" value="1"/>
</dbReference>
<dbReference type="PRINTS" id="PR00983">
    <property type="entry name" value="TRNASYNTHCYS"/>
</dbReference>
<dbReference type="SMART" id="SM00840">
    <property type="entry name" value="DALR_2"/>
    <property type="match status" value="1"/>
</dbReference>
<dbReference type="SUPFAM" id="SSF47323">
    <property type="entry name" value="Anticodon-binding domain of a subclass of class I aminoacyl-tRNA synthetases"/>
    <property type="match status" value="1"/>
</dbReference>
<dbReference type="SUPFAM" id="SSF52374">
    <property type="entry name" value="Nucleotidylyl transferase"/>
    <property type="match status" value="1"/>
</dbReference>
<feature type="chain" id="PRO_0000159530" description="Cysteine--tRNA ligase">
    <location>
        <begin position="1"/>
        <end position="461"/>
    </location>
</feature>
<feature type="short sequence motif" description="'HIGH' region">
    <location>
        <begin position="30"/>
        <end position="40"/>
    </location>
</feature>
<feature type="short sequence motif" description="'KMSKS' region">
    <location>
        <begin position="266"/>
        <end position="270"/>
    </location>
</feature>
<feature type="binding site" evidence="1">
    <location>
        <position position="28"/>
    </location>
    <ligand>
        <name>Zn(2+)</name>
        <dbReference type="ChEBI" id="CHEBI:29105"/>
    </ligand>
</feature>
<feature type="binding site" evidence="1">
    <location>
        <position position="209"/>
    </location>
    <ligand>
        <name>Zn(2+)</name>
        <dbReference type="ChEBI" id="CHEBI:29105"/>
    </ligand>
</feature>
<feature type="binding site" evidence="1">
    <location>
        <position position="234"/>
    </location>
    <ligand>
        <name>Zn(2+)</name>
        <dbReference type="ChEBI" id="CHEBI:29105"/>
    </ligand>
</feature>
<feature type="binding site" evidence="1">
    <location>
        <position position="238"/>
    </location>
    <ligand>
        <name>Zn(2+)</name>
        <dbReference type="ChEBI" id="CHEBI:29105"/>
    </ligand>
</feature>
<feature type="binding site" evidence="1">
    <location>
        <position position="269"/>
    </location>
    <ligand>
        <name>ATP</name>
        <dbReference type="ChEBI" id="CHEBI:30616"/>
    </ligand>
</feature>
<evidence type="ECO:0000255" key="1">
    <source>
        <dbReference type="HAMAP-Rule" id="MF_00041"/>
    </source>
</evidence>
<gene>
    <name evidence="1" type="primary">cysS</name>
    <name type="ordered locus">YPTB1035</name>
</gene>
<accession>Q66DK9</accession>
<name>SYC_YERPS</name>
<comment type="catalytic activity">
    <reaction evidence="1">
        <text>tRNA(Cys) + L-cysteine + ATP = L-cysteinyl-tRNA(Cys) + AMP + diphosphate</text>
        <dbReference type="Rhea" id="RHEA:17773"/>
        <dbReference type="Rhea" id="RHEA-COMP:9661"/>
        <dbReference type="Rhea" id="RHEA-COMP:9679"/>
        <dbReference type="ChEBI" id="CHEBI:30616"/>
        <dbReference type="ChEBI" id="CHEBI:33019"/>
        <dbReference type="ChEBI" id="CHEBI:35235"/>
        <dbReference type="ChEBI" id="CHEBI:78442"/>
        <dbReference type="ChEBI" id="CHEBI:78517"/>
        <dbReference type="ChEBI" id="CHEBI:456215"/>
        <dbReference type="EC" id="6.1.1.16"/>
    </reaction>
</comment>
<comment type="cofactor">
    <cofactor evidence="1">
        <name>Zn(2+)</name>
        <dbReference type="ChEBI" id="CHEBI:29105"/>
    </cofactor>
    <text evidence="1">Binds 1 zinc ion per subunit.</text>
</comment>
<comment type="subunit">
    <text evidence="1">Monomer.</text>
</comment>
<comment type="subcellular location">
    <subcellularLocation>
        <location evidence="1">Cytoplasm</location>
    </subcellularLocation>
</comment>
<comment type="similarity">
    <text evidence="1">Belongs to the class-I aminoacyl-tRNA synthetase family.</text>
</comment>
<protein>
    <recommendedName>
        <fullName evidence="1">Cysteine--tRNA ligase</fullName>
        <ecNumber evidence="1">6.1.1.16</ecNumber>
    </recommendedName>
    <alternativeName>
        <fullName evidence="1">Cysteinyl-tRNA synthetase</fullName>
        <shortName evidence="1">CysRS</shortName>
    </alternativeName>
</protein>
<sequence length="461" mass="52148">MLKIFNTLSRQKEEFKPIHAGKVGMYVCGITIYDLCHIGHGRTFVAFDVVARYLRYLGYSLTYVRNVTDVDDKIIKRAIENNETCEQLTTRMLAEMHKDFDALNLERPDLEPRATHHIAEIIEMTERLIARGHAYVASNGDVMFAVDSDPDYGVLSRQDLDQLQAGARVEVADVKRNPMDFVLWKMSKPGEPRWESPWGPGRPGWHIECSAMNGKQLGAHFDIHGGGSDLMFPHHENEIAQSTCAHDGPYVNYWMHSGMVMIDKEKMSKSLNNFFTIRDVLAYYDAETVRYFLMSGHYRSQLNYSEENLKQARASLERLYTALRGTDANATPAGGAEFEARFRTAMDDDFNTPEAYSVLFDIAREVNRLKNEDMAAANGLAAELRKLAQVLGLLEQDPELFLQGGAQADDDEVAKIEALIKQRNDARSSKNWALADAARDQLNDLGIVLEDGPQGTTWRRK</sequence>
<keyword id="KW-0030">Aminoacyl-tRNA synthetase</keyword>
<keyword id="KW-0067">ATP-binding</keyword>
<keyword id="KW-0963">Cytoplasm</keyword>
<keyword id="KW-0436">Ligase</keyword>
<keyword id="KW-0479">Metal-binding</keyword>
<keyword id="KW-0547">Nucleotide-binding</keyword>
<keyword id="KW-0648">Protein biosynthesis</keyword>
<keyword id="KW-0862">Zinc</keyword>
<organism>
    <name type="scientific">Yersinia pseudotuberculosis serotype I (strain IP32953)</name>
    <dbReference type="NCBI Taxonomy" id="273123"/>
    <lineage>
        <taxon>Bacteria</taxon>
        <taxon>Pseudomonadati</taxon>
        <taxon>Pseudomonadota</taxon>
        <taxon>Gammaproteobacteria</taxon>
        <taxon>Enterobacterales</taxon>
        <taxon>Yersiniaceae</taxon>
        <taxon>Yersinia</taxon>
    </lineage>
</organism>